<dbReference type="EMBL" id="CP001277">
    <property type="protein sequence ID" value="ACQ67122.1"/>
    <property type="molecule type" value="Genomic_DNA"/>
</dbReference>
<dbReference type="RefSeq" id="WP_012738082.1">
    <property type="nucleotide sequence ID" value="NC_012751.1"/>
</dbReference>
<dbReference type="GeneID" id="66260275"/>
<dbReference type="KEGG" id="hde:HDEF_0364"/>
<dbReference type="eggNOG" id="COG2707">
    <property type="taxonomic scope" value="Bacteria"/>
</dbReference>
<dbReference type="HOGENOM" id="CLU_125889_0_0_6"/>
<dbReference type="Proteomes" id="UP000002334">
    <property type="component" value="Chromosome"/>
</dbReference>
<dbReference type="GO" id="GO:0005886">
    <property type="term" value="C:plasma membrane"/>
    <property type="evidence" value="ECO:0007669"/>
    <property type="project" value="UniProtKB-SubCell"/>
</dbReference>
<dbReference type="HAMAP" id="MF_01874">
    <property type="entry name" value="UPF0756"/>
    <property type="match status" value="1"/>
</dbReference>
<dbReference type="InterPro" id="IPR007382">
    <property type="entry name" value="UPF0756_TM"/>
</dbReference>
<dbReference type="PANTHER" id="PTHR38452">
    <property type="entry name" value="UPF0756 MEMBRANE PROTEIN YEAL"/>
    <property type="match status" value="1"/>
</dbReference>
<dbReference type="PANTHER" id="PTHR38452:SF1">
    <property type="entry name" value="UPF0756 MEMBRANE PROTEIN YEAL"/>
    <property type="match status" value="1"/>
</dbReference>
<dbReference type="Pfam" id="PF04284">
    <property type="entry name" value="DUF441"/>
    <property type="match status" value="1"/>
</dbReference>
<reference key="1">
    <citation type="journal article" date="2009" name="Proc. Natl. Acad. Sci. U.S.A.">
        <title>Hamiltonella defensa, genome evolution of protective bacterial endosymbiont from pathogenic ancestors.</title>
        <authorList>
            <person name="Degnan P.H."/>
            <person name="Yu Y."/>
            <person name="Sisneros N."/>
            <person name="Wing R.A."/>
            <person name="Moran N.A."/>
        </authorList>
    </citation>
    <scope>NUCLEOTIDE SEQUENCE [LARGE SCALE GENOMIC DNA]</scope>
    <source>
        <strain>5AT</strain>
    </source>
</reference>
<name>Y364_HAMD5</name>
<feature type="chain" id="PRO_0000388887" description="UPF0756 membrane protein HDEF_0364">
    <location>
        <begin position="1"/>
        <end position="150"/>
    </location>
</feature>
<feature type="transmembrane region" description="Helical" evidence="1">
    <location>
        <begin position="1"/>
        <end position="21"/>
    </location>
</feature>
<feature type="transmembrane region" description="Helical" evidence="1">
    <location>
        <begin position="28"/>
        <end position="48"/>
    </location>
</feature>
<feature type="transmembrane region" description="Helical" evidence="1">
    <location>
        <begin position="51"/>
        <end position="71"/>
    </location>
</feature>
<feature type="transmembrane region" description="Helical" evidence="1">
    <location>
        <begin position="88"/>
        <end position="108"/>
    </location>
</feature>
<feature type="transmembrane region" description="Helical" evidence="1">
    <location>
        <begin position="123"/>
        <end position="143"/>
    </location>
</feature>
<protein>
    <recommendedName>
        <fullName evidence="1">UPF0756 membrane protein HDEF_0364</fullName>
    </recommendedName>
</protein>
<evidence type="ECO:0000255" key="1">
    <source>
        <dbReference type="HAMAP-Rule" id="MF_01874"/>
    </source>
</evidence>
<accession>C4K3H9</accession>
<proteinExistence type="inferred from homology"/>
<keyword id="KW-1003">Cell membrane</keyword>
<keyword id="KW-0472">Membrane</keyword>
<keyword id="KW-0812">Transmembrane</keyword>
<keyword id="KW-1133">Transmembrane helix</keyword>
<comment type="subcellular location">
    <subcellularLocation>
        <location evidence="1">Cell membrane</location>
        <topology evidence="1">Multi-pass membrane protein</topology>
    </subcellularLocation>
</comment>
<comment type="similarity">
    <text evidence="1">Belongs to the UPF0756 family.</text>
</comment>
<gene>
    <name type="ordered locus">HDEF_0364</name>
</gene>
<sequence length="150" mass="16125">MMFFSSTFFVLLLFAILGLISKNMTLSISVVCLFFLSFIYPNLIFPWVEKYALKAGILILTIAVLAPIASGKINARDIFNSFTHWQSILGILIGVFVSWLGGRGVSLMSHQPSVVTGLLVGTILGVAFFKGVPVGPLIAAGLLSLALGKF</sequence>
<organism>
    <name type="scientific">Hamiltonella defensa subsp. Acyrthosiphon pisum (strain 5AT)</name>
    <dbReference type="NCBI Taxonomy" id="572265"/>
    <lineage>
        <taxon>Bacteria</taxon>
        <taxon>Pseudomonadati</taxon>
        <taxon>Pseudomonadota</taxon>
        <taxon>Gammaproteobacteria</taxon>
        <taxon>Enterobacterales</taxon>
        <taxon>Enterobacteriaceae</taxon>
        <taxon>aphid secondary symbionts</taxon>
        <taxon>Candidatus Hamiltonella</taxon>
    </lineage>
</organism>